<evidence type="ECO:0000250" key="1"/>
<evidence type="ECO:0000250" key="2">
    <source>
        <dbReference type="UniProtKB" id="Q9H6Y2"/>
    </source>
</evidence>
<evidence type="ECO:0000256" key="3">
    <source>
        <dbReference type="SAM" id="MobiDB-lite"/>
    </source>
</evidence>
<evidence type="ECO:0000305" key="4"/>
<feature type="chain" id="PRO_0000237597" description="WD repeat-containing protein 55">
    <location>
        <begin position="1"/>
        <end position="382"/>
    </location>
</feature>
<feature type="repeat" description="WD 1">
    <location>
        <begin position="36"/>
        <end position="75"/>
    </location>
</feature>
<feature type="repeat" description="WD 2">
    <location>
        <begin position="82"/>
        <end position="121"/>
    </location>
</feature>
<feature type="repeat" description="WD 3">
    <location>
        <begin position="125"/>
        <end position="163"/>
    </location>
</feature>
<feature type="repeat" description="WD 4">
    <location>
        <begin position="166"/>
        <end position="205"/>
    </location>
</feature>
<feature type="repeat" description="WD 5">
    <location>
        <begin position="208"/>
        <end position="247"/>
    </location>
</feature>
<feature type="repeat" description="WD 6">
    <location>
        <begin position="250"/>
        <end position="289"/>
    </location>
</feature>
<feature type="repeat" description="WD 7">
    <location>
        <begin position="293"/>
        <end position="332"/>
    </location>
</feature>
<feature type="region of interest" description="Disordered" evidence="3">
    <location>
        <begin position="1"/>
        <end position="31"/>
    </location>
</feature>
<feature type="compositionally biased region" description="Basic and acidic residues" evidence="3">
    <location>
        <begin position="1"/>
        <end position="11"/>
    </location>
</feature>
<feature type="compositionally biased region" description="Acidic residues" evidence="3">
    <location>
        <begin position="12"/>
        <end position="21"/>
    </location>
</feature>
<feature type="modified residue" description="Phosphoserine" evidence="2">
    <location>
        <position position="14"/>
    </location>
</feature>
<feature type="modified residue" description="Phosphoserine" evidence="2">
    <location>
        <position position="354"/>
    </location>
</feature>
<feature type="modified residue" description="Phosphoserine" evidence="2">
    <location>
        <position position="381"/>
    </location>
</feature>
<comment type="function">
    <text evidence="1">Nucleolar protein that acts as a modulator of rRNA synthesis. Plays a central role during organogenesis (By similarity).</text>
</comment>
<comment type="subcellular location">
    <subcellularLocation>
        <location evidence="1">Nucleus</location>
        <location evidence="1">Nucleolus</location>
    </subcellularLocation>
    <subcellularLocation>
        <location evidence="1">Cytoplasm</location>
    </subcellularLocation>
</comment>
<comment type="similarity">
    <text evidence="4">Belongs to the WD repeat WDR55 family.</text>
</comment>
<sequence length="382" mass="42046">MDRMCEERAAEDGSDEEDPDATEAPARIRDTPEDIVLEAPASGLAFHPARDLLAAGDVDGDVFVFSYSCQEGETKELWSSGHHLKSCRAVVFSEDGQKLVTVSKDKAIHFLDVELGRLERRISKAHGAPINSLLLVDENVLATGDDTGGIRLWDQRKEGPLMDMRQHEEYIADMALDPDKKLLLTASGDGCLGVFNIKRRRFELLSEPQSGDLTSVTLMKYGRKVACGSSEGTIYLFNWDGFGATSDRFALRAESIDCMVPVTESLLCAGSTDGVIRAVNILPNRVVGSVGQHAEEPVENLALSHCGCFLASSGHDQRLKFWDMAQLRALVVDDYRRRKKKGGPLRALSSKAWSTDDFFAGLREEGEDAKTLEEEESEDDSD</sequence>
<name>WDR55_BOVIN</name>
<organism>
    <name type="scientific">Bos taurus</name>
    <name type="common">Bovine</name>
    <dbReference type="NCBI Taxonomy" id="9913"/>
    <lineage>
        <taxon>Eukaryota</taxon>
        <taxon>Metazoa</taxon>
        <taxon>Chordata</taxon>
        <taxon>Craniata</taxon>
        <taxon>Vertebrata</taxon>
        <taxon>Euteleostomi</taxon>
        <taxon>Mammalia</taxon>
        <taxon>Eutheria</taxon>
        <taxon>Laurasiatheria</taxon>
        <taxon>Artiodactyla</taxon>
        <taxon>Ruminantia</taxon>
        <taxon>Pecora</taxon>
        <taxon>Bovidae</taxon>
        <taxon>Bovinae</taxon>
        <taxon>Bos</taxon>
    </lineage>
</organism>
<dbReference type="EMBL" id="BT021509">
    <property type="protein sequence ID" value="AAX46356.1"/>
    <property type="molecule type" value="mRNA"/>
</dbReference>
<dbReference type="EMBL" id="BT029846">
    <property type="protein sequence ID" value="ABM06102.1"/>
    <property type="molecule type" value="mRNA"/>
</dbReference>
<dbReference type="EMBL" id="BC102226">
    <property type="protein sequence ID" value="AAI02227.1"/>
    <property type="molecule type" value="mRNA"/>
</dbReference>
<dbReference type="RefSeq" id="NP_001014873.1">
    <property type="nucleotide sequence ID" value="NM_001014873.1"/>
</dbReference>
<dbReference type="SMR" id="Q58DT8"/>
<dbReference type="FunCoup" id="Q58DT8">
    <property type="interactions" value="3058"/>
</dbReference>
<dbReference type="STRING" id="9913.ENSBTAP00000020021"/>
<dbReference type="PaxDb" id="9913-ENSBTAP00000020021"/>
<dbReference type="Ensembl" id="ENSBTAT00000020021.3">
    <property type="protein sequence ID" value="ENSBTAP00000020021.1"/>
    <property type="gene ID" value="ENSBTAG00000015042.3"/>
</dbReference>
<dbReference type="GeneID" id="508709"/>
<dbReference type="KEGG" id="bta:508709"/>
<dbReference type="CTD" id="54853"/>
<dbReference type="VEuPathDB" id="HostDB:ENSBTAG00000015042"/>
<dbReference type="VGNC" id="VGNC:36906">
    <property type="gene designation" value="WDR55"/>
</dbReference>
<dbReference type="eggNOG" id="KOG2444">
    <property type="taxonomic scope" value="Eukaryota"/>
</dbReference>
<dbReference type="GeneTree" id="ENSGT00940000153727"/>
<dbReference type="HOGENOM" id="CLU_035848_0_1_1"/>
<dbReference type="InParanoid" id="Q58DT8"/>
<dbReference type="OMA" id="QAIHPTE"/>
<dbReference type="OrthoDB" id="2288928at2759"/>
<dbReference type="TreeFam" id="TF315175"/>
<dbReference type="Proteomes" id="UP000009136">
    <property type="component" value="Chromosome 7"/>
</dbReference>
<dbReference type="Bgee" id="ENSBTAG00000015042">
    <property type="expression patterns" value="Expressed in digestive system secreted substance and 104 other cell types or tissues"/>
</dbReference>
<dbReference type="GO" id="GO:0005737">
    <property type="term" value="C:cytoplasm"/>
    <property type="evidence" value="ECO:0007669"/>
    <property type="project" value="UniProtKB-SubCell"/>
</dbReference>
<dbReference type="GO" id="GO:0005730">
    <property type="term" value="C:nucleolus"/>
    <property type="evidence" value="ECO:0000250"/>
    <property type="project" value="UniProtKB"/>
</dbReference>
<dbReference type="GO" id="GO:0005654">
    <property type="term" value="C:nucleoplasm"/>
    <property type="evidence" value="ECO:0007669"/>
    <property type="project" value="Ensembl"/>
</dbReference>
<dbReference type="GO" id="GO:0006364">
    <property type="term" value="P:rRNA processing"/>
    <property type="evidence" value="ECO:0000250"/>
    <property type="project" value="UniProtKB"/>
</dbReference>
<dbReference type="FunFam" id="2.130.10.10:FF:000333">
    <property type="entry name" value="WD repeat-containing protein 55"/>
    <property type="match status" value="1"/>
</dbReference>
<dbReference type="FunFam" id="2.130.10.10:FF:000389">
    <property type="entry name" value="WD repeat-containing protein 55"/>
    <property type="match status" value="1"/>
</dbReference>
<dbReference type="Gene3D" id="2.130.10.10">
    <property type="entry name" value="YVTN repeat-like/Quinoprotein amine dehydrogenase"/>
    <property type="match status" value="2"/>
</dbReference>
<dbReference type="InterPro" id="IPR015943">
    <property type="entry name" value="WD40/YVTN_repeat-like_dom_sf"/>
</dbReference>
<dbReference type="InterPro" id="IPR019775">
    <property type="entry name" value="WD40_repeat_CS"/>
</dbReference>
<dbReference type="InterPro" id="IPR036322">
    <property type="entry name" value="WD40_repeat_dom_sf"/>
</dbReference>
<dbReference type="InterPro" id="IPR001680">
    <property type="entry name" value="WD40_rpt"/>
</dbReference>
<dbReference type="InterPro" id="IPR017422">
    <property type="entry name" value="WDR55"/>
</dbReference>
<dbReference type="InterPro" id="IPR050505">
    <property type="entry name" value="WDR55_POC1"/>
</dbReference>
<dbReference type="PANTHER" id="PTHR44019">
    <property type="entry name" value="WD REPEAT-CONTAINING PROTEIN 55"/>
    <property type="match status" value="1"/>
</dbReference>
<dbReference type="PANTHER" id="PTHR44019:SF20">
    <property type="entry name" value="WD REPEAT-CONTAINING PROTEIN 55"/>
    <property type="match status" value="1"/>
</dbReference>
<dbReference type="Pfam" id="PF24796">
    <property type="entry name" value="WDR55"/>
    <property type="match status" value="1"/>
</dbReference>
<dbReference type="PIRSF" id="PIRSF038169">
    <property type="entry name" value="WD_repeat_p55"/>
    <property type="match status" value="1"/>
</dbReference>
<dbReference type="SMART" id="SM00320">
    <property type="entry name" value="WD40"/>
    <property type="match status" value="6"/>
</dbReference>
<dbReference type="SUPFAM" id="SSF50978">
    <property type="entry name" value="WD40 repeat-like"/>
    <property type="match status" value="1"/>
</dbReference>
<dbReference type="PROSITE" id="PS00678">
    <property type="entry name" value="WD_REPEATS_1"/>
    <property type="match status" value="1"/>
</dbReference>
<dbReference type="PROSITE" id="PS50082">
    <property type="entry name" value="WD_REPEATS_2"/>
    <property type="match status" value="1"/>
</dbReference>
<dbReference type="PROSITE" id="PS50294">
    <property type="entry name" value="WD_REPEATS_REGION"/>
    <property type="match status" value="1"/>
</dbReference>
<proteinExistence type="evidence at transcript level"/>
<protein>
    <recommendedName>
        <fullName>WD repeat-containing protein 55</fullName>
    </recommendedName>
</protein>
<keyword id="KW-0963">Cytoplasm</keyword>
<keyword id="KW-0539">Nucleus</keyword>
<keyword id="KW-0597">Phosphoprotein</keyword>
<keyword id="KW-1185">Reference proteome</keyword>
<keyword id="KW-0677">Repeat</keyword>
<keyword id="KW-0698">rRNA processing</keyword>
<keyword id="KW-0853">WD repeat</keyword>
<reference key="1">
    <citation type="journal article" date="2005" name="BMC Genomics">
        <title>Characterization of 954 bovine full-CDS cDNA sequences.</title>
        <authorList>
            <person name="Harhay G.P."/>
            <person name="Sonstegard T.S."/>
            <person name="Keele J.W."/>
            <person name="Heaton M.P."/>
            <person name="Clawson M.L."/>
            <person name="Snelling W.M."/>
            <person name="Wiedmann R.T."/>
            <person name="Van Tassell C.P."/>
            <person name="Smith T.P.L."/>
        </authorList>
    </citation>
    <scope>NUCLEOTIDE SEQUENCE [LARGE SCALE MRNA]</scope>
</reference>
<reference key="2">
    <citation type="submission" date="2005-08" db="EMBL/GenBank/DDBJ databases">
        <authorList>
            <consortium name="NIH - Mammalian Gene Collection (MGC) project"/>
        </authorList>
    </citation>
    <scope>NUCLEOTIDE SEQUENCE [LARGE SCALE MRNA]</scope>
    <source>
        <strain>Crossbred X Angus</strain>
        <tissue>Ileum</tissue>
    </source>
</reference>
<accession>Q58DT8</accession>
<accession>A1L559</accession>
<gene>
    <name type="primary">WDR55</name>
</gene>